<organism>
    <name type="scientific">Cricetulus griseus</name>
    <name type="common">Chinese hamster</name>
    <name type="synonym">Cricetulus barabensis griseus</name>
    <dbReference type="NCBI Taxonomy" id="10029"/>
    <lineage>
        <taxon>Eukaryota</taxon>
        <taxon>Metazoa</taxon>
        <taxon>Chordata</taxon>
        <taxon>Craniata</taxon>
        <taxon>Vertebrata</taxon>
        <taxon>Euteleostomi</taxon>
        <taxon>Mammalia</taxon>
        <taxon>Eutheria</taxon>
        <taxon>Euarchontoglires</taxon>
        <taxon>Glires</taxon>
        <taxon>Rodentia</taxon>
        <taxon>Myomorpha</taxon>
        <taxon>Muroidea</taxon>
        <taxon>Cricetidae</taxon>
        <taxon>Cricetinae</taxon>
        <taxon>Cricetulus</taxon>
    </lineage>
</organism>
<keyword id="KW-0012">Acyltransferase</keyword>
<keyword id="KW-0256">Endoplasmic reticulum</keyword>
<keyword id="KW-0443">Lipid metabolism</keyword>
<keyword id="KW-0472">Membrane</keyword>
<keyword id="KW-0597">Phosphoprotein</keyword>
<keyword id="KW-0663">Pyridoxal phosphate</keyword>
<keyword id="KW-0746">Sphingolipid metabolism</keyword>
<keyword id="KW-0808">Transferase</keyword>
<keyword id="KW-0812">Transmembrane</keyword>
<keyword id="KW-1133">Transmembrane helix</keyword>
<evidence type="ECO:0000250" key="1"/>
<evidence type="ECO:0000250" key="2">
    <source>
        <dbReference type="UniProtKB" id="O15269"/>
    </source>
</evidence>
<evidence type="ECO:0000250" key="3">
    <source>
        <dbReference type="UniProtKB" id="O35704"/>
    </source>
</evidence>
<evidence type="ECO:0000255" key="4"/>
<evidence type="ECO:0000269" key="5">
    <source>
    </source>
</evidence>
<evidence type="ECO:0000305" key="6"/>
<feature type="chain" id="PRO_0000163852" description="Serine palmitoyltransferase 1">
    <location>
        <begin position="1"/>
        <end position="473"/>
    </location>
</feature>
<feature type="topological domain" description="Lumenal" evidence="4">
    <location>
        <begin position="1"/>
        <end position="15"/>
    </location>
</feature>
<feature type="transmembrane region" description="Helical" evidence="4">
    <location>
        <begin position="16"/>
        <end position="36"/>
    </location>
</feature>
<feature type="topological domain" description="Cytoplasmic" evidence="4">
    <location>
        <begin position="37"/>
        <end position="473"/>
    </location>
</feature>
<feature type="region of interest" description="Interaction with SPTLC2" evidence="2">
    <location>
        <begin position="1"/>
        <end position="66"/>
    </location>
</feature>
<feature type="modified residue" description="Phosphotyrosine; by ABL" evidence="2">
    <location>
        <position position="164"/>
    </location>
</feature>
<name>SPTC1_CRIGR</name>
<sequence length="473" mass="52520">MAMAAEQWVLVEMVQALYEAPAYHLILEGILILWIIRLVFSKTYKLQERSDLTAKEKEELIEEWQPEPLVPPVSKNHPALNYNIVSGPPTHNIVVNGKECVNFASFNFLGLLANPRVKAAALASLKKYGVGTCGPRGFYGTFDVHLDLEERLAKFMRTEEAIIYSYGFSTIASAIPAYSKRGDIVFVDSAACFAIQKGLQASRSDIKLFKHNDVADLERLLKEQEIEDQKNPRKARVTRRFIVVEGLYMNTGTVCPLPELVKLKYKYKARIFLEESLSFGVLGEHGRGVTEHYGISIDDIDLISANMENALASVGGFCCGRSFVVDHQRLSGQGYCFSASLPPLLAAAAIEALNIMEENPGIFAVLKKKCQHIHKSLQGISGLKVVGESLSPALHLQLEESTGSREKDVQLLQEMVIHCMNEGIALTQARYLDKEEKCLPPPSIRVVVTVEQTEEELERAASTIREAAQAVLL</sequence>
<gene>
    <name type="primary">SPTLC1</name>
    <name type="synonym">LCB1</name>
</gene>
<accession>O54695</accession>
<comment type="function">
    <text evidence="2 3">Component of the serine palmitoyltransferase multisubunit enzyme (SPT) that catalyzes the initial and rate-limiting step in sphingolipid biosynthesis by condensing L-serine and activated acyl-CoA (most commonly palmitoyl-CoA) to form long-chain bases. The SPT complex is also composed of SPTLC2 or SPTLC3 and SPTSSA or SPTSSB. Within this complex, the heterodimer with SPTLC2 or SPTLC3 forms the catalytic core. The composition of the serine palmitoyltransferase (SPT) complex determines the substrate preference. The SPTLC1-SPTLC2-SPTSSA complex shows a strong preference for C16-CoA substrate, while the SPTLC1-SPTLC3-SPTSSA isozyme uses both C14-CoA and C16-CoA as substrates, with a slight preference for C14-CoA. The SPTLC1-SPTLC2-SPTSSB complex shows a strong preference for C18-CoA substrate, while the SPTLC1-SPTLC3-SPTSSB isozyme displays an ability to use a broader range of acyl-CoAs, without apparent preference (By similarity). Required for adipocyte cell viability and metabolic homeostasis (By similarity).</text>
</comment>
<comment type="catalytic activity">
    <reaction evidence="2">
        <text>L-serine + hexadecanoyl-CoA + H(+) = 3-oxosphinganine + CO2 + CoA</text>
        <dbReference type="Rhea" id="RHEA:14761"/>
        <dbReference type="ChEBI" id="CHEBI:15378"/>
        <dbReference type="ChEBI" id="CHEBI:16526"/>
        <dbReference type="ChEBI" id="CHEBI:33384"/>
        <dbReference type="ChEBI" id="CHEBI:57287"/>
        <dbReference type="ChEBI" id="CHEBI:57379"/>
        <dbReference type="ChEBI" id="CHEBI:58299"/>
        <dbReference type="EC" id="2.3.1.50"/>
    </reaction>
    <physiologicalReaction direction="left-to-right" evidence="2">
        <dbReference type="Rhea" id="RHEA:14762"/>
    </physiologicalReaction>
</comment>
<comment type="catalytic activity">
    <reaction evidence="2">
        <text>octadecanoyl-CoA + L-serine + H(+) = 3-oxoeicosasphinganine + CO2 + CoA</text>
        <dbReference type="Rhea" id="RHEA:33683"/>
        <dbReference type="ChEBI" id="CHEBI:15378"/>
        <dbReference type="ChEBI" id="CHEBI:16526"/>
        <dbReference type="ChEBI" id="CHEBI:33384"/>
        <dbReference type="ChEBI" id="CHEBI:57287"/>
        <dbReference type="ChEBI" id="CHEBI:57394"/>
        <dbReference type="ChEBI" id="CHEBI:65073"/>
    </reaction>
    <physiologicalReaction direction="left-to-right" evidence="2">
        <dbReference type="Rhea" id="RHEA:33684"/>
    </physiologicalReaction>
</comment>
<comment type="catalytic activity">
    <reaction evidence="2">
        <text>tetradecanoyl-CoA + L-serine + H(+) = 3-oxohexadecasphinganine + CO2 + CoA</text>
        <dbReference type="Rhea" id="RHEA:35675"/>
        <dbReference type="ChEBI" id="CHEBI:15378"/>
        <dbReference type="ChEBI" id="CHEBI:16526"/>
        <dbReference type="ChEBI" id="CHEBI:33384"/>
        <dbReference type="ChEBI" id="CHEBI:57287"/>
        <dbReference type="ChEBI" id="CHEBI:57385"/>
        <dbReference type="ChEBI" id="CHEBI:71007"/>
    </reaction>
    <physiologicalReaction direction="left-to-right" evidence="2">
        <dbReference type="Rhea" id="RHEA:35676"/>
    </physiologicalReaction>
</comment>
<comment type="catalytic activity">
    <reaction evidence="2">
        <text>dodecanoyl-CoA + L-serine + H(+) = 3-oxotetradecasphinganine + CO2 + CoA</text>
        <dbReference type="Rhea" id="RHEA:35679"/>
        <dbReference type="ChEBI" id="CHEBI:15378"/>
        <dbReference type="ChEBI" id="CHEBI:16526"/>
        <dbReference type="ChEBI" id="CHEBI:33384"/>
        <dbReference type="ChEBI" id="CHEBI:57287"/>
        <dbReference type="ChEBI" id="CHEBI:57375"/>
        <dbReference type="ChEBI" id="CHEBI:71008"/>
    </reaction>
    <physiologicalReaction direction="left-to-right" evidence="2">
        <dbReference type="Rhea" id="RHEA:35680"/>
    </physiologicalReaction>
</comment>
<comment type="cofactor">
    <cofactor evidence="1">
        <name>pyridoxal 5'-phosphate</name>
        <dbReference type="ChEBI" id="CHEBI:597326"/>
    </cofactor>
</comment>
<comment type="activity regulation">
    <text evidence="2 6">SPT complex catalytic activity is negatively regulated by ORMDL proteins, including ORMDL3, in the presence of ceramides (By similarity). This mechanism allows to maintain ceramide levels at sufficient concentrations for the production of complex sphingolipids, but which prevents the accumulation of ceramides to levels that trigger apoptosis (Probable).</text>
</comment>
<comment type="pathway">
    <text>Lipid metabolism; sphingolipid metabolism.</text>
</comment>
<comment type="subunit">
    <text evidence="2 3">Component of the serine palmitoyltransferase (SPT) complex, which is also composed of SPTLC2 or SPTLC3 and SPTSSA or SPTSSB (By similarity). The heterodimer with SPTLC2 or SPTLC3 forms the catalytic core of the enzyme, while SPTSSA or SPTSSB subunits determine substrate specificity (By similarity). SPT also interacts with ORMDL proteins, especially ORMDL3, which negatively regulate SPT activity in the presence of ceramides (By similarity). Forms dimers of heterodimers with SPTLC2 (By similarity). Interacts with RTN4 (By similarity).</text>
</comment>
<comment type="subcellular location">
    <subcellularLocation>
        <location evidence="5">Endoplasmic reticulum membrane</location>
        <topology evidence="5">Single-pass membrane protein</topology>
    </subcellularLocation>
</comment>
<comment type="domain">
    <text evidence="2">The transmembrane domain is involved in the interaction with ORMDL3.</text>
</comment>
<comment type="PTM">
    <text evidence="2">Phosphorylation at Tyr-164 inhibits activity and promotes cell survival.</text>
</comment>
<comment type="similarity">
    <text evidence="6">Belongs to the class-II pyridoxal-phosphate-dependent aminotransferase family.</text>
</comment>
<reference key="1">
    <citation type="journal article" date="1997" name="J. Biol. Chem.">
        <title>A mammalian homolog of the yeast LCB1 encodes a component of serine palmitoyltransferase, the enzyme catalyzing the first step in sphingolipid synthesis.</title>
        <authorList>
            <person name="Hanada K."/>
            <person name="Hara T."/>
            <person name="Nishijima M."/>
            <person name="Kuge O."/>
            <person name="Dickson R.C."/>
            <person name="Nagiec M.M."/>
        </authorList>
    </citation>
    <scope>NUCLEOTIDE SEQUENCE [MRNA]</scope>
    <source>
        <tissue>Ovary</tissue>
    </source>
</reference>
<reference key="2">
    <citation type="journal article" date="2003" name="J. Biol. Chem.">
        <title>Localization, topology, and function of the LCB1 subunit of serine palmitoyltransferase in mammalian cells.</title>
        <authorList>
            <person name="Yasuda S."/>
            <person name="Nishijima M."/>
            <person name="Hanada K."/>
        </authorList>
    </citation>
    <scope>SUBCELLULAR LOCATION</scope>
    <scope>MEMBRANE TOPOLOGY</scope>
</reference>
<dbReference type="EC" id="2.3.1.50" evidence="2"/>
<dbReference type="EMBL" id="AF004831">
    <property type="protein sequence ID" value="AAC53505.1"/>
    <property type="molecule type" value="mRNA"/>
</dbReference>
<dbReference type="RefSeq" id="NP_001233688.1">
    <property type="nucleotide sequence ID" value="NM_001246759.1"/>
</dbReference>
<dbReference type="SMR" id="O54695"/>
<dbReference type="PaxDb" id="10029-NP_001233688.1"/>
<dbReference type="Ensembl" id="ENSCGRT00001000975.1">
    <property type="protein sequence ID" value="ENSCGRP00001000951.1"/>
    <property type="gene ID" value="ENSCGRG00001000731.1"/>
</dbReference>
<dbReference type="GeneID" id="100689326"/>
<dbReference type="KEGG" id="cge:100689326"/>
<dbReference type="CTD" id="10558"/>
<dbReference type="eggNOG" id="KOG1358">
    <property type="taxonomic scope" value="Eukaryota"/>
</dbReference>
<dbReference type="GeneTree" id="ENSGT00550000074872"/>
<dbReference type="OMA" id="LTKYGCG"/>
<dbReference type="OrthoDB" id="3168162at2759"/>
<dbReference type="UniPathway" id="UPA00222"/>
<dbReference type="Proteomes" id="UP000694386">
    <property type="component" value="Unplaced"/>
</dbReference>
<dbReference type="Proteomes" id="UP001108280">
    <property type="component" value="Chromosome 3"/>
</dbReference>
<dbReference type="GO" id="GO:0005789">
    <property type="term" value="C:endoplasmic reticulum membrane"/>
    <property type="evidence" value="ECO:0007669"/>
    <property type="project" value="UniProtKB-SubCell"/>
</dbReference>
<dbReference type="GO" id="GO:0017059">
    <property type="term" value="C:serine palmitoyltransferase complex"/>
    <property type="evidence" value="ECO:0000314"/>
    <property type="project" value="MGI"/>
</dbReference>
<dbReference type="GO" id="GO:0030170">
    <property type="term" value="F:pyridoxal phosphate binding"/>
    <property type="evidence" value="ECO:0007669"/>
    <property type="project" value="InterPro"/>
</dbReference>
<dbReference type="GO" id="GO:0004758">
    <property type="term" value="F:serine C-palmitoyltransferase activity"/>
    <property type="evidence" value="ECO:0000250"/>
    <property type="project" value="UniProtKB"/>
</dbReference>
<dbReference type="GO" id="GO:0046513">
    <property type="term" value="P:ceramide biosynthetic process"/>
    <property type="evidence" value="ECO:0007669"/>
    <property type="project" value="Ensembl"/>
</dbReference>
<dbReference type="GO" id="GO:1904504">
    <property type="term" value="P:positive regulation of lipophagy"/>
    <property type="evidence" value="ECO:0007669"/>
    <property type="project" value="Ensembl"/>
</dbReference>
<dbReference type="GO" id="GO:1904649">
    <property type="term" value="P:regulation of fat cell apoptotic process"/>
    <property type="evidence" value="ECO:0000250"/>
    <property type="project" value="UniProtKB"/>
</dbReference>
<dbReference type="GO" id="GO:0046511">
    <property type="term" value="P:sphinganine biosynthetic process"/>
    <property type="evidence" value="ECO:0007669"/>
    <property type="project" value="Ensembl"/>
</dbReference>
<dbReference type="GO" id="GO:0006686">
    <property type="term" value="P:sphingomyelin biosynthetic process"/>
    <property type="evidence" value="ECO:0000314"/>
    <property type="project" value="MGI"/>
</dbReference>
<dbReference type="GO" id="GO:0046512">
    <property type="term" value="P:sphingosine biosynthetic process"/>
    <property type="evidence" value="ECO:0007669"/>
    <property type="project" value="Ensembl"/>
</dbReference>
<dbReference type="FunFam" id="3.40.640.10:FF:000049">
    <property type="entry name" value="serine palmitoyltransferase 1 isoform X1"/>
    <property type="match status" value="1"/>
</dbReference>
<dbReference type="Gene3D" id="3.90.1150.10">
    <property type="entry name" value="Aspartate Aminotransferase, domain 1"/>
    <property type="match status" value="1"/>
</dbReference>
<dbReference type="Gene3D" id="3.40.640.10">
    <property type="entry name" value="Type I PLP-dependent aspartate aminotransferase-like (Major domain)"/>
    <property type="match status" value="1"/>
</dbReference>
<dbReference type="InterPro" id="IPR004839">
    <property type="entry name" value="Aminotransferase_I/II_large"/>
</dbReference>
<dbReference type="InterPro" id="IPR050087">
    <property type="entry name" value="AON_synthase_class-II"/>
</dbReference>
<dbReference type="InterPro" id="IPR015424">
    <property type="entry name" value="PyrdxlP-dep_Trfase"/>
</dbReference>
<dbReference type="InterPro" id="IPR015421">
    <property type="entry name" value="PyrdxlP-dep_Trfase_major"/>
</dbReference>
<dbReference type="InterPro" id="IPR015422">
    <property type="entry name" value="PyrdxlP-dep_Trfase_small"/>
</dbReference>
<dbReference type="PANTHER" id="PTHR13693">
    <property type="entry name" value="CLASS II AMINOTRANSFERASE/8-AMINO-7-OXONONANOATE SYNTHASE"/>
    <property type="match status" value="1"/>
</dbReference>
<dbReference type="PANTHER" id="PTHR13693:SF2">
    <property type="entry name" value="SERINE PALMITOYLTRANSFERASE 1"/>
    <property type="match status" value="1"/>
</dbReference>
<dbReference type="Pfam" id="PF00155">
    <property type="entry name" value="Aminotran_1_2"/>
    <property type="match status" value="1"/>
</dbReference>
<dbReference type="SUPFAM" id="SSF53383">
    <property type="entry name" value="PLP-dependent transferases"/>
    <property type="match status" value="1"/>
</dbReference>
<proteinExistence type="evidence at protein level"/>
<protein>
    <recommendedName>
        <fullName>Serine palmitoyltransferase 1</fullName>
        <ecNumber evidence="2">2.3.1.50</ecNumber>
    </recommendedName>
    <alternativeName>
        <fullName>Long chain base biosynthesis protein 1</fullName>
        <shortName>LCB 1</shortName>
    </alternativeName>
    <alternativeName>
        <fullName>Serine-palmitoyl-CoA transferase 1</fullName>
        <shortName>SPT 1</shortName>
        <shortName>SPT1</shortName>
    </alternativeName>
</protein>